<accession>Q5EAE9</accession>
<accession>F4K0U7</accession>
<accession>Q9FFJ7</accession>
<proteinExistence type="evidence at transcript level"/>
<organism>
    <name type="scientific">Arabidopsis thaliana</name>
    <name type="common">Mouse-ear cress</name>
    <dbReference type="NCBI Taxonomy" id="3702"/>
    <lineage>
        <taxon>Eukaryota</taxon>
        <taxon>Viridiplantae</taxon>
        <taxon>Streptophyta</taxon>
        <taxon>Embryophyta</taxon>
        <taxon>Tracheophyta</taxon>
        <taxon>Spermatophyta</taxon>
        <taxon>Magnoliopsida</taxon>
        <taxon>eudicotyledons</taxon>
        <taxon>Gunneridae</taxon>
        <taxon>Pentapetalae</taxon>
        <taxon>rosids</taxon>
        <taxon>malvids</taxon>
        <taxon>Brassicales</taxon>
        <taxon>Brassicaceae</taxon>
        <taxon>Camelineae</taxon>
        <taxon>Arabidopsis</taxon>
    </lineage>
</organism>
<feature type="signal peptide" evidence="2">
    <location>
        <begin position="1"/>
        <end position="22"/>
    </location>
</feature>
<feature type="chain" id="PRO_0000030715" description="RING-H2 finger protein ATL43">
    <location>
        <begin position="23"/>
        <end position="407"/>
    </location>
</feature>
<feature type="transmembrane region" description="Helical" evidence="2">
    <location>
        <begin position="57"/>
        <end position="77"/>
    </location>
</feature>
<feature type="zinc finger region" description="RING-type; atypical" evidence="3">
    <location>
        <begin position="146"/>
        <end position="188"/>
    </location>
</feature>
<comment type="catalytic activity">
    <reaction evidence="4">
        <text>S-ubiquitinyl-[E2 ubiquitin-conjugating enzyme]-L-cysteine + [acceptor protein]-L-lysine = [E2 ubiquitin-conjugating enzyme]-L-cysteine + N(6)-ubiquitinyl-[acceptor protein]-L-lysine.</text>
        <dbReference type="EC" id="2.3.2.27"/>
    </reaction>
</comment>
<comment type="pathway">
    <text>Protein modification; protein ubiquitination.</text>
</comment>
<comment type="subcellular location">
    <subcellularLocation>
        <location evidence="4">Membrane</location>
        <topology evidence="4">Single-pass membrane protein</topology>
    </subcellularLocation>
</comment>
<comment type="domain">
    <text evidence="1">The RING-type zinc finger domain mediates binding to an E2 ubiquitin-conjugating enzyme.</text>
</comment>
<comment type="similarity">
    <text evidence="4">Belongs to the RING-type zinc finger family. ATL subfamily.</text>
</comment>
<comment type="sequence caution" evidence="4">
    <conflict type="erroneous initiation">
        <sequence resource="EMBL-CDS" id="AAW81728"/>
    </conflict>
    <text>Truncated N-terminus.</text>
</comment>
<gene>
    <name type="primary">ATL43</name>
    <name type="ordered locus">At5g05810</name>
    <name type="ORF">MJJ3.23</name>
</gene>
<name>ATL43_ARATH</name>
<sequence length="407" mass="45269">MSSSSLILLFSTLSLFLNVSLADNHTAVVITTSDTPPPLPPPSPPPRHNFTSSLMPGIAVVIAVLTAFFSLTFLLLLYVKHCKRRNGSVYVNHPQRFAITRYGGGYYNGGGVVGGRKNSGIDRSVIESLPVFRFGALSGHKDGLECAVCLARFEPTEVLRLLPKCKHAFHVECVDTWLDAHSTCPLCRYRVDPEDILLIGDCNSWFELQFSKDESNSVNNNPPGLTRFIPVSRISGRHSSAGERASRLNEIRTSSSYKSNPMSFRRSLDSSLKVNDAGEEKSESVAVNCLDRLQRKDGLLLIPNRESFEGRFEHRIIISGGNRDDQRWSEVRPSDLLYLRSEMILSDCRKLAAAEGGRDVINGRSVSELTGIERRRRWGGEPRQRQATAVISRWLAWSHRASASSIV</sequence>
<protein>
    <recommendedName>
        <fullName>RING-H2 finger protein ATL43</fullName>
        <ecNumber evidence="4">2.3.2.27</ecNumber>
    </recommendedName>
    <alternativeName>
        <fullName evidence="4">RING-type E3 ubiquitin transferase ATL43</fullName>
    </alternativeName>
</protein>
<dbReference type="EC" id="2.3.2.27" evidence="4"/>
<dbReference type="EMBL" id="AB005237">
    <property type="protein sequence ID" value="BAB09675.1"/>
    <property type="molecule type" value="Genomic_DNA"/>
</dbReference>
<dbReference type="EMBL" id="CP002688">
    <property type="protein sequence ID" value="AED90928.2"/>
    <property type="molecule type" value="Genomic_DNA"/>
</dbReference>
<dbReference type="EMBL" id="BT020620">
    <property type="protein sequence ID" value="AAW81728.1"/>
    <property type="status" value="ALT_INIT"/>
    <property type="molecule type" value="mRNA"/>
</dbReference>
<dbReference type="EMBL" id="BT021932">
    <property type="protein sequence ID" value="AAX49381.1"/>
    <property type="molecule type" value="mRNA"/>
</dbReference>
<dbReference type="RefSeq" id="NP_196200.3">
    <property type="nucleotide sequence ID" value="NM_120663.3"/>
</dbReference>
<dbReference type="SMR" id="Q5EAE9"/>
<dbReference type="FunCoup" id="Q5EAE9">
    <property type="interactions" value="11"/>
</dbReference>
<dbReference type="STRING" id="3702.Q5EAE9"/>
<dbReference type="PaxDb" id="3702-AT5G05810.1"/>
<dbReference type="EnsemblPlants" id="AT5G05810.1">
    <property type="protein sequence ID" value="AT5G05810.1"/>
    <property type="gene ID" value="AT5G05810"/>
</dbReference>
<dbReference type="GeneID" id="830466"/>
<dbReference type="Gramene" id="AT5G05810.1">
    <property type="protein sequence ID" value="AT5G05810.1"/>
    <property type="gene ID" value="AT5G05810"/>
</dbReference>
<dbReference type="KEGG" id="ath:AT5G05810"/>
<dbReference type="Araport" id="AT5G05810"/>
<dbReference type="TAIR" id="AT5G05810">
    <property type="gene designation" value="ATL43"/>
</dbReference>
<dbReference type="eggNOG" id="KOG0800">
    <property type="taxonomic scope" value="Eukaryota"/>
</dbReference>
<dbReference type="HOGENOM" id="CLU_046350_1_0_1"/>
<dbReference type="InParanoid" id="Q5EAE9"/>
<dbReference type="OMA" id="WSHRASA"/>
<dbReference type="OrthoDB" id="8062037at2759"/>
<dbReference type="PhylomeDB" id="Q5EAE9"/>
<dbReference type="UniPathway" id="UPA00143"/>
<dbReference type="PRO" id="PR:Q5EAE9"/>
<dbReference type="Proteomes" id="UP000006548">
    <property type="component" value="Chromosome 5"/>
</dbReference>
<dbReference type="ExpressionAtlas" id="Q5EAE9">
    <property type="expression patterns" value="baseline and differential"/>
</dbReference>
<dbReference type="GO" id="GO:0016020">
    <property type="term" value="C:membrane"/>
    <property type="evidence" value="ECO:0007669"/>
    <property type="project" value="UniProtKB-SubCell"/>
</dbReference>
<dbReference type="GO" id="GO:0016740">
    <property type="term" value="F:transferase activity"/>
    <property type="evidence" value="ECO:0007669"/>
    <property type="project" value="UniProtKB-KW"/>
</dbReference>
<dbReference type="GO" id="GO:0008270">
    <property type="term" value="F:zinc ion binding"/>
    <property type="evidence" value="ECO:0007669"/>
    <property type="project" value="UniProtKB-KW"/>
</dbReference>
<dbReference type="GO" id="GO:0016567">
    <property type="term" value="P:protein ubiquitination"/>
    <property type="evidence" value="ECO:0007669"/>
    <property type="project" value="UniProtKB-UniPathway"/>
</dbReference>
<dbReference type="CDD" id="cd16461">
    <property type="entry name" value="RING-H2_EL5-like"/>
    <property type="match status" value="1"/>
</dbReference>
<dbReference type="FunFam" id="3.30.40.10:FF:000285">
    <property type="entry name" value="RING-H2 finger protein ATL43"/>
    <property type="match status" value="1"/>
</dbReference>
<dbReference type="Gene3D" id="3.30.40.10">
    <property type="entry name" value="Zinc/RING finger domain, C3HC4 (zinc finger)"/>
    <property type="match status" value="1"/>
</dbReference>
<dbReference type="InterPro" id="IPR001841">
    <property type="entry name" value="Znf_RING"/>
</dbReference>
<dbReference type="InterPro" id="IPR013083">
    <property type="entry name" value="Znf_RING/FYVE/PHD"/>
</dbReference>
<dbReference type="PANTHER" id="PTHR46539">
    <property type="entry name" value="E3 UBIQUITIN-PROTEIN LIGASE ATL42"/>
    <property type="match status" value="1"/>
</dbReference>
<dbReference type="PANTHER" id="PTHR46539:SF2">
    <property type="entry name" value="RING-H2 FINGER PROTEIN ATL43"/>
    <property type="match status" value="1"/>
</dbReference>
<dbReference type="Pfam" id="PF13639">
    <property type="entry name" value="zf-RING_2"/>
    <property type="match status" value="1"/>
</dbReference>
<dbReference type="SMART" id="SM00184">
    <property type="entry name" value="RING"/>
    <property type="match status" value="1"/>
</dbReference>
<dbReference type="SUPFAM" id="SSF57850">
    <property type="entry name" value="RING/U-box"/>
    <property type="match status" value="1"/>
</dbReference>
<dbReference type="PROSITE" id="PS50089">
    <property type="entry name" value="ZF_RING_2"/>
    <property type="match status" value="1"/>
</dbReference>
<reference key="1">
    <citation type="journal article" date="1997" name="DNA Res.">
        <title>Structural analysis of Arabidopsis thaliana chromosome 5. I. Sequence features of the 1.6 Mb regions covered by twenty physically assigned P1 clones.</title>
        <authorList>
            <person name="Sato S."/>
            <person name="Kotani H."/>
            <person name="Nakamura Y."/>
            <person name="Kaneko T."/>
            <person name="Asamizu E."/>
            <person name="Fukami M."/>
            <person name="Miyajima N."/>
            <person name="Tabata S."/>
        </authorList>
    </citation>
    <scope>NUCLEOTIDE SEQUENCE [LARGE SCALE GENOMIC DNA]</scope>
    <source>
        <strain>cv. Columbia</strain>
    </source>
</reference>
<reference key="2">
    <citation type="journal article" date="2017" name="Plant J.">
        <title>Araport11: a complete reannotation of the Arabidopsis thaliana reference genome.</title>
        <authorList>
            <person name="Cheng C.Y."/>
            <person name="Krishnakumar V."/>
            <person name="Chan A.P."/>
            <person name="Thibaud-Nissen F."/>
            <person name="Schobel S."/>
            <person name="Town C.D."/>
        </authorList>
    </citation>
    <scope>GENOME REANNOTATION</scope>
    <source>
        <strain>cv. Columbia</strain>
    </source>
</reference>
<reference key="3">
    <citation type="submission" date="2005-02" db="EMBL/GenBank/DDBJ databases">
        <title>Arabidopsis ORF clones.</title>
        <authorList>
            <person name="Kim C.J."/>
            <person name="Chen H."/>
            <person name="Cheuk R.F."/>
            <person name="Shinn P."/>
            <person name="Ecker J.R."/>
        </authorList>
    </citation>
    <scope>NUCLEOTIDE SEQUENCE [LARGE SCALE MRNA] OF 21-407</scope>
    <source>
        <strain>cv. Columbia</strain>
    </source>
</reference>
<reference key="4">
    <citation type="submission" date="2005-03" db="EMBL/GenBank/DDBJ databases">
        <title>Arabidopsis ORF clones.</title>
        <authorList>
            <person name="Kim C.J."/>
            <person name="Chen H."/>
            <person name="Cheuk R.F."/>
            <person name="Shinn P."/>
            <person name="Ecker J.R."/>
        </authorList>
    </citation>
    <scope>NUCLEOTIDE SEQUENCE [LARGE SCALE MRNA] OF 55-407</scope>
    <source>
        <strain>cv. Columbia</strain>
    </source>
</reference>
<reference key="5">
    <citation type="journal article" date="2002" name="Genome Biol.">
        <title>Evaluation and classification of RING-finger domains encoded by the Arabidopsis genome.</title>
        <authorList>
            <person name="Kosarev P."/>
            <person name="Mayer K.F.X."/>
            <person name="Hardtke C.S."/>
        </authorList>
    </citation>
    <scope>GENE FAMILY ORGANIZATION</scope>
</reference>
<reference key="6">
    <citation type="journal article" date="2006" name="J. Mol. Evol.">
        <title>The ATL gene family from Arabidopsis thaliana and Oryza sativa comprises a large number of putative ubiquitin ligases of the RING-H2 type.</title>
        <authorList>
            <person name="Serrano M."/>
            <person name="Parra S."/>
            <person name="Alcaraz L.D."/>
            <person name="Guzman P."/>
        </authorList>
    </citation>
    <scope>NOMENCLATURE</scope>
    <scope>GENE FAMILY ORGANIZATION</scope>
</reference>
<keyword id="KW-0472">Membrane</keyword>
<keyword id="KW-0479">Metal-binding</keyword>
<keyword id="KW-1185">Reference proteome</keyword>
<keyword id="KW-0732">Signal</keyword>
<keyword id="KW-0808">Transferase</keyword>
<keyword id="KW-0812">Transmembrane</keyword>
<keyword id="KW-1133">Transmembrane helix</keyword>
<keyword id="KW-0833">Ubl conjugation pathway</keyword>
<keyword id="KW-0862">Zinc</keyword>
<keyword id="KW-0863">Zinc-finger</keyword>
<evidence type="ECO:0000250" key="1"/>
<evidence type="ECO:0000255" key="2"/>
<evidence type="ECO:0000255" key="3">
    <source>
        <dbReference type="PROSITE-ProRule" id="PRU00175"/>
    </source>
</evidence>
<evidence type="ECO:0000305" key="4"/>